<accession>C3N5H5</accession>
<evidence type="ECO:0000255" key="1">
    <source>
        <dbReference type="HAMAP-Rule" id="MF_00241"/>
    </source>
</evidence>
<feature type="chain" id="PRO_1000204469" description="8-oxoguanine DNA glycosylase/AP lyase">
    <location>
        <begin position="1"/>
        <end position="207"/>
    </location>
</feature>
<feature type="active site" evidence="1">
    <location>
        <position position="128"/>
    </location>
</feature>
<feature type="active site" evidence="1">
    <location>
        <position position="146"/>
    </location>
</feature>
<feature type="site" description="Important for guanine/8-oxoguanine distinction" evidence="1">
    <location>
        <position position="207"/>
    </location>
</feature>
<gene>
    <name evidence="1" type="primary">ogg</name>
    <name type="ordered locus">M1627_1367</name>
</gene>
<reference key="1">
    <citation type="journal article" date="2009" name="Proc. Natl. Acad. Sci. U.S.A.">
        <title>Biogeography of the Sulfolobus islandicus pan-genome.</title>
        <authorList>
            <person name="Reno M.L."/>
            <person name="Held N.L."/>
            <person name="Fields C.J."/>
            <person name="Burke P.V."/>
            <person name="Whitaker R.J."/>
        </authorList>
    </citation>
    <scope>NUCLEOTIDE SEQUENCE [LARGE SCALE GENOMIC DNA]</scope>
    <source>
        <strain>M.16.27</strain>
    </source>
</reference>
<name>OGG1_SACI3</name>
<keyword id="KW-0227">DNA damage</keyword>
<keyword id="KW-0234">DNA repair</keyword>
<keyword id="KW-0326">Glycosidase</keyword>
<keyword id="KW-0378">Hydrolase</keyword>
<keyword id="KW-0456">Lyase</keyword>
<keyword id="KW-0511">Multifunctional enzyme</keyword>
<comment type="function">
    <text evidence="1">Catalyzes the excision of an oxidatively damaged form of guanine (7,8-dihydro-8-oxoguanine = 8-oxoG) from DNA. Also cleaves the DNA backbone at apurinic/apyrimidinic sites (AP sites).</text>
</comment>
<comment type="catalytic activity">
    <reaction evidence="1">
        <text>2'-deoxyribonucleotide-(2'-deoxyribose 5'-phosphate)-2'-deoxyribonucleotide-DNA = a 3'-end 2'-deoxyribonucleotide-(2,3-dehydro-2,3-deoxyribose 5'-phosphate)-DNA + a 5'-end 5'-phospho-2'-deoxyribonucleoside-DNA + H(+)</text>
        <dbReference type="Rhea" id="RHEA:66592"/>
        <dbReference type="Rhea" id="RHEA-COMP:13180"/>
        <dbReference type="Rhea" id="RHEA-COMP:16897"/>
        <dbReference type="Rhea" id="RHEA-COMP:17067"/>
        <dbReference type="ChEBI" id="CHEBI:15378"/>
        <dbReference type="ChEBI" id="CHEBI:136412"/>
        <dbReference type="ChEBI" id="CHEBI:157695"/>
        <dbReference type="ChEBI" id="CHEBI:167181"/>
        <dbReference type="EC" id="4.2.99.18"/>
    </reaction>
</comment>
<comment type="similarity">
    <text evidence="1">Belongs to the type-2 OGG1 family.</text>
</comment>
<organism>
    <name type="scientific">Saccharolobus islandicus (strain M.16.27)</name>
    <name type="common">Sulfolobus islandicus</name>
    <dbReference type="NCBI Taxonomy" id="427318"/>
    <lineage>
        <taxon>Archaea</taxon>
        <taxon>Thermoproteota</taxon>
        <taxon>Thermoprotei</taxon>
        <taxon>Sulfolobales</taxon>
        <taxon>Sulfolobaceae</taxon>
        <taxon>Saccharolobus</taxon>
    </lineage>
</organism>
<proteinExistence type="inferred from homology"/>
<protein>
    <recommendedName>
        <fullName evidence="1">8-oxoguanine DNA glycosylase/AP lyase</fullName>
    </recommendedName>
    <domain>
        <recommendedName>
            <fullName evidence="1">8-oxoguanine DNA glycosylase</fullName>
            <shortName evidence="1">8-oxoG DNA glycosylase</shortName>
            <ecNumber evidence="1">3.2.2.-</ecNumber>
        </recommendedName>
    </domain>
    <domain>
        <recommendedName>
            <fullName evidence="1">DNA-(apurinic or apyrimidinic site) lyase</fullName>
            <shortName evidence="1">AP lyase</shortName>
            <ecNumber evidence="1">4.2.99.18</ecNumber>
        </recommendedName>
    </domain>
</protein>
<dbReference type="EC" id="3.2.2.-" evidence="1"/>
<dbReference type="EC" id="4.2.99.18" evidence="1"/>
<dbReference type="EMBL" id="CP001401">
    <property type="protein sequence ID" value="ACP55250.1"/>
    <property type="molecule type" value="Genomic_DNA"/>
</dbReference>
<dbReference type="RefSeq" id="WP_012711322.1">
    <property type="nucleotide sequence ID" value="NC_012632.1"/>
</dbReference>
<dbReference type="SMR" id="C3N5H5"/>
<dbReference type="KEGG" id="sim:M1627_1367"/>
<dbReference type="HOGENOM" id="CLU_104937_0_0_2"/>
<dbReference type="Proteomes" id="UP000002307">
    <property type="component" value="Chromosome"/>
</dbReference>
<dbReference type="GO" id="GO:0140078">
    <property type="term" value="F:class I DNA-(apurinic or apyrimidinic site) endonuclease activity"/>
    <property type="evidence" value="ECO:0007669"/>
    <property type="project" value="UniProtKB-EC"/>
</dbReference>
<dbReference type="GO" id="GO:0016799">
    <property type="term" value="F:hydrolase activity, hydrolyzing N-glycosyl compounds"/>
    <property type="evidence" value="ECO:0007669"/>
    <property type="project" value="UniProtKB-UniRule"/>
</dbReference>
<dbReference type="GO" id="GO:0006284">
    <property type="term" value="P:base-excision repair"/>
    <property type="evidence" value="ECO:0007669"/>
    <property type="project" value="UniProtKB-UniRule"/>
</dbReference>
<dbReference type="CDD" id="cd00056">
    <property type="entry name" value="ENDO3c"/>
    <property type="match status" value="1"/>
</dbReference>
<dbReference type="Gene3D" id="1.10.1670.10">
    <property type="entry name" value="Helix-hairpin-Helix base-excision DNA repair enzymes (C-terminal)"/>
    <property type="match status" value="1"/>
</dbReference>
<dbReference type="Gene3D" id="1.10.340.30">
    <property type="entry name" value="Hypothetical protein, domain 2"/>
    <property type="match status" value="1"/>
</dbReference>
<dbReference type="HAMAP" id="MF_00241">
    <property type="entry name" value="Ogg"/>
    <property type="match status" value="1"/>
</dbReference>
<dbReference type="InterPro" id="IPR012092">
    <property type="entry name" value="DNA_glyclase/AP_lyase_Ogg"/>
</dbReference>
<dbReference type="InterPro" id="IPR011257">
    <property type="entry name" value="DNA_glycosylase"/>
</dbReference>
<dbReference type="InterPro" id="IPR003265">
    <property type="entry name" value="HhH-GPD_domain"/>
</dbReference>
<dbReference type="InterPro" id="IPR023170">
    <property type="entry name" value="HhH_base_excis_C"/>
</dbReference>
<dbReference type="NCBIfam" id="NF002305">
    <property type="entry name" value="PRK01229.1"/>
    <property type="match status" value="1"/>
</dbReference>
<dbReference type="Pfam" id="PF22175">
    <property type="entry name" value="Ogg-HhH"/>
    <property type="match status" value="1"/>
</dbReference>
<dbReference type="PIRSF" id="PIRSF005954">
    <property type="entry name" value="Thrmst_ogg"/>
    <property type="match status" value="1"/>
</dbReference>
<dbReference type="SMART" id="SM00478">
    <property type="entry name" value="ENDO3c"/>
    <property type="match status" value="1"/>
</dbReference>
<dbReference type="SUPFAM" id="SSF48150">
    <property type="entry name" value="DNA-glycosylase"/>
    <property type="match status" value="1"/>
</dbReference>
<sequence>MLRSLVQNPRVRARVLERVDEFRLNNLSNEEVWFRELTLCLLTANSSFISAYQALNCLGDKIYYANEEVIRSILKSCKYRFYNLKAKYIIMAREKVYGKLKEEITPLADSDQQLAREKLLNIKGIGMKEASHFLRNVGYFDLAIIDRHLIDFMRRIGAIGETNVKHLSKSRYISLESVLKSIALNLNISVGILDLFIWYKETNTIVK</sequence>